<proteinExistence type="inferred from homology"/>
<organism>
    <name type="scientific">Caldicellulosiruptor saccharolyticus (strain ATCC 43494 / DSM 8903 / Tp8T 6331)</name>
    <dbReference type="NCBI Taxonomy" id="351627"/>
    <lineage>
        <taxon>Bacteria</taxon>
        <taxon>Bacillati</taxon>
        <taxon>Bacillota</taxon>
        <taxon>Bacillota incertae sedis</taxon>
        <taxon>Caldicellulosiruptorales</taxon>
        <taxon>Caldicellulosiruptoraceae</taxon>
        <taxon>Caldicellulosiruptor</taxon>
    </lineage>
</organism>
<reference key="1">
    <citation type="submission" date="2007-04" db="EMBL/GenBank/DDBJ databases">
        <title>Genome sequence of the thermophilic hydrogen-producing bacterium Caldicellulosiruptor saccharolyticus DSM 8903.</title>
        <authorList>
            <person name="Copeland A."/>
            <person name="Lucas S."/>
            <person name="Lapidus A."/>
            <person name="Barry K."/>
            <person name="Detter J.C."/>
            <person name="Glavina del Rio T."/>
            <person name="Hammon N."/>
            <person name="Israni S."/>
            <person name="Dalin E."/>
            <person name="Tice H."/>
            <person name="Pitluck S."/>
            <person name="Kiss H."/>
            <person name="Brettin T."/>
            <person name="Bruce D."/>
            <person name="Han C."/>
            <person name="Schmutz J."/>
            <person name="Larimer F."/>
            <person name="Land M."/>
            <person name="Hauser L."/>
            <person name="Kyrpides N."/>
            <person name="Lykidis A."/>
            <person name="van de Werken H.J.G."/>
            <person name="Verhaart M.R.A."/>
            <person name="VanFossen A.L."/>
            <person name="Lewis D.L."/>
            <person name="Nichols J.D."/>
            <person name="Goorissen H.P."/>
            <person name="van Niel E.W.J."/>
            <person name="Stams F.J.M."/>
            <person name="Willquist K.U."/>
            <person name="Ward D.E."/>
            <person name="van der Oost J."/>
            <person name="Kelly R.M."/>
            <person name="Kengen S.M.W."/>
            <person name="Richardson P."/>
        </authorList>
    </citation>
    <scope>NUCLEOTIDE SEQUENCE [LARGE SCALE GENOMIC DNA]</scope>
    <source>
        <strain>ATCC 43494 / DSM 8903 / Tp8T 6331</strain>
    </source>
</reference>
<dbReference type="EC" id="4.1.1.11" evidence="1"/>
<dbReference type="EMBL" id="CP000679">
    <property type="protein sequence ID" value="ABP68277.1"/>
    <property type="molecule type" value="Genomic_DNA"/>
</dbReference>
<dbReference type="RefSeq" id="WP_011918194.1">
    <property type="nucleotide sequence ID" value="NC_009437.1"/>
</dbReference>
<dbReference type="SMR" id="A4XMZ2"/>
<dbReference type="STRING" id="351627.Csac_2708"/>
<dbReference type="KEGG" id="csc:Csac_2708"/>
<dbReference type="eggNOG" id="COG0853">
    <property type="taxonomic scope" value="Bacteria"/>
</dbReference>
<dbReference type="HOGENOM" id="CLU_115305_2_0_9"/>
<dbReference type="OrthoDB" id="9803983at2"/>
<dbReference type="UniPathway" id="UPA00028">
    <property type="reaction ID" value="UER00002"/>
</dbReference>
<dbReference type="Proteomes" id="UP000000256">
    <property type="component" value="Chromosome"/>
</dbReference>
<dbReference type="GO" id="GO:0005829">
    <property type="term" value="C:cytosol"/>
    <property type="evidence" value="ECO:0007669"/>
    <property type="project" value="TreeGrafter"/>
</dbReference>
<dbReference type="GO" id="GO:0004068">
    <property type="term" value="F:aspartate 1-decarboxylase activity"/>
    <property type="evidence" value="ECO:0007669"/>
    <property type="project" value="UniProtKB-UniRule"/>
</dbReference>
<dbReference type="GO" id="GO:0006523">
    <property type="term" value="P:alanine biosynthetic process"/>
    <property type="evidence" value="ECO:0007669"/>
    <property type="project" value="InterPro"/>
</dbReference>
<dbReference type="GO" id="GO:0015940">
    <property type="term" value="P:pantothenate biosynthetic process"/>
    <property type="evidence" value="ECO:0007669"/>
    <property type="project" value="UniProtKB-UniRule"/>
</dbReference>
<dbReference type="CDD" id="cd06919">
    <property type="entry name" value="Asp_decarbox"/>
    <property type="match status" value="1"/>
</dbReference>
<dbReference type="Gene3D" id="2.40.40.20">
    <property type="match status" value="1"/>
</dbReference>
<dbReference type="HAMAP" id="MF_00446">
    <property type="entry name" value="PanD"/>
    <property type="match status" value="1"/>
</dbReference>
<dbReference type="InterPro" id="IPR009010">
    <property type="entry name" value="Asp_de-COase-like_dom_sf"/>
</dbReference>
<dbReference type="InterPro" id="IPR003190">
    <property type="entry name" value="Asp_decarbox"/>
</dbReference>
<dbReference type="NCBIfam" id="TIGR00223">
    <property type="entry name" value="panD"/>
    <property type="match status" value="1"/>
</dbReference>
<dbReference type="PANTHER" id="PTHR21012">
    <property type="entry name" value="ASPARTATE 1-DECARBOXYLASE"/>
    <property type="match status" value="1"/>
</dbReference>
<dbReference type="PANTHER" id="PTHR21012:SF0">
    <property type="entry name" value="ASPARTATE 1-DECARBOXYLASE"/>
    <property type="match status" value="1"/>
</dbReference>
<dbReference type="Pfam" id="PF02261">
    <property type="entry name" value="Asp_decarbox"/>
    <property type="match status" value="1"/>
</dbReference>
<dbReference type="PIRSF" id="PIRSF006246">
    <property type="entry name" value="Asp_decarbox"/>
    <property type="match status" value="1"/>
</dbReference>
<dbReference type="SUPFAM" id="SSF50692">
    <property type="entry name" value="ADC-like"/>
    <property type="match status" value="1"/>
</dbReference>
<accession>A4XMZ2</accession>
<gene>
    <name evidence="1" type="primary">panD</name>
    <name type="ordered locus">Csac_2708</name>
</gene>
<sequence length="128" mass="14303">MLIEVLKSKIHRATVTEANLNYVGSITIDEELMEAAGILENEKVQVVNINNGERFETYVIKGERGSGTICLNGAAARLVQVGDKVIIMAYCLLTMEEYKTHMPKIVFVDDNNKIVKLSNKEEHSECLC</sequence>
<comment type="function">
    <text evidence="1">Catalyzes the pyruvoyl-dependent decarboxylation of aspartate to produce beta-alanine.</text>
</comment>
<comment type="catalytic activity">
    <reaction evidence="1">
        <text>L-aspartate + H(+) = beta-alanine + CO2</text>
        <dbReference type="Rhea" id="RHEA:19497"/>
        <dbReference type="ChEBI" id="CHEBI:15378"/>
        <dbReference type="ChEBI" id="CHEBI:16526"/>
        <dbReference type="ChEBI" id="CHEBI:29991"/>
        <dbReference type="ChEBI" id="CHEBI:57966"/>
        <dbReference type="EC" id="4.1.1.11"/>
    </reaction>
</comment>
<comment type="cofactor">
    <cofactor evidence="1">
        <name>pyruvate</name>
        <dbReference type="ChEBI" id="CHEBI:15361"/>
    </cofactor>
    <text evidence="1">Binds 1 pyruvoyl group covalently per subunit.</text>
</comment>
<comment type="pathway">
    <text evidence="1">Cofactor biosynthesis; (R)-pantothenate biosynthesis; beta-alanine from L-aspartate: step 1/1.</text>
</comment>
<comment type="subunit">
    <text evidence="1">Heterooctamer of four alpha and four beta subunits.</text>
</comment>
<comment type="subcellular location">
    <subcellularLocation>
        <location evidence="1">Cytoplasm</location>
    </subcellularLocation>
</comment>
<comment type="PTM">
    <text evidence="1">Is synthesized initially as an inactive proenzyme, which is activated by self-cleavage at a specific serine bond to produce a beta-subunit with a hydroxyl group at its C-terminus and an alpha-subunit with a pyruvoyl group at its N-terminus.</text>
</comment>
<comment type="similarity">
    <text evidence="1">Belongs to the PanD family.</text>
</comment>
<keyword id="KW-0068">Autocatalytic cleavage</keyword>
<keyword id="KW-0963">Cytoplasm</keyword>
<keyword id="KW-0210">Decarboxylase</keyword>
<keyword id="KW-0456">Lyase</keyword>
<keyword id="KW-0566">Pantothenate biosynthesis</keyword>
<keyword id="KW-0670">Pyruvate</keyword>
<keyword id="KW-0704">Schiff base</keyword>
<keyword id="KW-0865">Zymogen</keyword>
<protein>
    <recommendedName>
        <fullName evidence="1">Aspartate 1-decarboxylase</fullName>
        <ecNumber evidence="1">4.1.1.11</ecNumber>
    </recommendedName>
    <alternativeName>
        <fullName evidence="1">Aspartate alpha-decarboxylase</fullName>
    </alternativeName>
    <component>
        <recommendedName>
            <fullName evidence="1">Aspartate 1-decarboxylase beta chain</fullName>
        </recommendedName>
    </component>
    <component>
        <recommendedName>
            <fullName evidence="1">Aspartate 1-decarboxylase alpha chain</fullName>
        </recommendedName>
    </component>
</protein>
<evidence type="ECO:0000255" key="1">
    <source>
        <dbReference type="HAMAP-Rule" id="MF_00446"/>
    </source>
</evidence>
<name>PAND_CALS8</name>
<feature type="chain" id="PRO_1000026165" description="Aspartate 1-decarboxylase beta chain" evidence="1">
    <location>
        <begin position="1"/>
        <end position="24"/>
    </location>
</feature>
<feature type="chain" id="PRO_0000316056" description="Aspartate 1-decarboxylase alpha chain" evidence="1">
    <location>
        <begin position="25"/>
        <end position="128"/>
    </location>
</feature>
<feature type="active site" description="Schiff-base intermediate with substrate; via pyruvic acid" evidence="1">
    <location>
        <position position="25"/>
    </location>
</feature>
<feature type="active site" description="Proton donor" evidence="1">
    <location>
        <position position="58"/>
    </location>
</feature>
<feature type="binding site" evidence="1">
    <location>
        <position position="57"/>
    </location>
    <ligand>
        <name>substrate</name>
    </ligand>
</feature>
<feature type="binding site" evidence="1">
    <location>
        <begin position="73"/>
        <end position="75"/>
    </location>
    <ligand>
        <name>substrate</name>
    </ligand>
</feature>
<feature type="modified residue" description="Pyruvic acid (Ser)" evidence="1">
    <location>
        <position position="25"/>
    </location>
</feature>